<keyword id="KW-0963">Cytoplasm</keyword>
<keyword id="KW-0489">Methyltransferase</keyword>
<keyword id="KW-0698">rRNA processing</keyword>
<keyword id="KW-0949">S-adenosyl-L-methionine</keyword>
<keyword id="KW-0808">Transferase</keyword>
<gene>
    <name evidence="1" type="primary">rsmH</name>
    <name type="synonym">mraW</name>
    <name type="ordered locus">XF_0790</name>
</gene>
<dbReference type="EC" id="2.1.1.199" evidence="1"/>
<dbReference type="EMBL" id="AE003849">
    <property type="protein sequence ID" value="AAF83600.1"/>
    <property type="molecule type" value="Genomic_DNA"/>
</dbReference>
<dbReference type="PIR" id="E82762">
    <property type="entry name" value="E82762"/>
</dbReference>
<dbReference type="SMR" id="Q9PF88"/>
<dbReference type="STRING" id="160492.XF_0790"/>
<dbReference type="KEGG" id="xfa:XF_0790"/>
<dbReference type="eggNOG" id="COG0275">
    <property type="taxonomic scope" value="Bacteria"/>
</dbReference>
<dbReference type="HOGENOM" id="CLU_038422_3_0_6"/>
<dbReference type="Proteomes" id="UP000000812">
    <property type="component" value="Chromosome"/>
</dbReference>
<dbReference type="GO" id="GO:0005737">
    <property type="term" value="C:cytoplasm"/>
    <property type="evidence" value="ECO:0007669"/>
    <property type="project" value="UniProtKB-SubCell"/>
</dbReference>
<dbReference type="GO" id="GO:0071424">
    <property type="term" value="F:rRNA (cytosine-N4-)-methyltransferase activity"/>
    <property type="evidence" value="ECO:0007669"/>
    <property type="project" value="UniProtKB-UniRule"/>
</dbReference>
<dbReference type="GO" id="GO:0070475">
    <property type="term" value="P:rRNA base methylation"/>
    <property type="evidence" value="ECO:0007669"/>
    <property type="project" value="UniProtKB-UniRule"/>
</dbReference>
<dbReference type="Gene3D" id="1.10.150.170">
    <property type="entry name" value="Putative methyltransferase TM0872, insert domain"/>
    <property type="match status" value="1"/>
</dbReference>
<dbReference type="Gene3D" id="3.40.50.150">
    <property type="entry name" value="Vaccinia Virus protein VP39"/>
    <property type="match status" value="1"/>
</dbReference>
<dbReference type="HAMAP" id="MF_01007">
    <property type="entry name" value="16SrRNA_methyltr_H"/>
    <property type="match status" value="1"/>
</dbReference>
<dbReference type="InterPro" id="IPR002903">
    <property type="entry name" value="RsmH"/>
</dbReference>
<dbReference type="InterPro" id="IPR023397">
    <property type="entry name" value="SAM-dep_MeTrfase_MraW_recog"/>
</dbReference>
<dbReference type="InterPro" id="IPR029063">
    <property type="entry name" value="SAM-dependent_MTases_sf"/>
</dbReference>
<dbReference type="NCBIfam" id="TIGR00006">
    <property type="entry name" value="16S rRNA (cytosine(1402)-N(4))-methyltransferase RsmH"/>
    <property type="match status" value="1"/>
</dbReference>
<dbReference type="PANTHER" id="PTHR11265:SF0">
    <property type="entry name" value="12S RRNA N4-METHYLCYTIDINE METHYLTRANSFERASE"/>
    <property type="match status" value="1"/>
</dbReference>
<dbReference type="PANTHER" id="PTHR11265">
    <property type="entry name" value="S-ADENOSYL-METHYLTRANSFERASE MRAW"/>
    <property type="match status" value="1"/>
</dbReference>
<dbReference type="Pfam" id="PF01795">
    <property type="entry name" value="Methyltransf_5"/>
    <property type="match status" value="1"/>
</dbReference>
<dbReference type="PIRSF" id="PIRSF004486">
    <property type="entry name" value="MraW"/>
    <property type="match status" value="1"/>
</dbReference>
<dbReference type="SUPFAM" id="SSF81799">
    <property type="entry name" value="Putative methyltransferase TM0872, insert domain"/>
    <property type="match status" value="1"/>
</dbReference>
<dbReference type="SUPFAM" id="SSF53335">
    <property type="entry name" value="S-adenosyl-L-methionine-dependent methyltransferases"/>
    <property type="match status" value="1"/>
</dbReference>
<accession>Q9PF88</accession>
<organism>
    <name type="scientific">Xylella fastidiosa (strain 9a5c)</name>
    <dbReference type="NCBI Taxonomy" id="160492"/>
    <lineage>
        <taxon>Bacteria</taxon>
        <taxon>Pseudomonadati</taxon>
        <taxon>Pseudomonadota</taxon>
        <taxon>Gammaproteobacteria</taxon>
        <taxon>Lysobacterales</taxon>
        <taxon>Lysobacteraceae</taxon>
        <taxon>Xylella</taxon>
    </lineage>
</organism>
<proteinExistence type="inferred from homology"/>
<reference key="1">
    <citation type="journal article" date="2000" name="Nature">
        <title>The genome sequence of the plant pathogen Xylella fastidiosa.</title>
        <authorList>
            <person name="Simpson A.J.G."/>
            <person name="Reinach F.C."/>
            <person name="Arruda P."/>
            <person name="Abreu F.A."/>
            <person name="Acencio M."/>
            <person name="Alvarenga R."/>
            <person name="Alves L.M.C."/>
            <person name="Araya J.E."/>
            <person name="Baia G.S."/>
            <person name="Baptista C.S."/>
            <person name="Barros M.H."/>
            <person name="Bonaccorsi E.D."/>
            <person name="Bordin S."/>
            <person name="Bove J.M."/>
            <person name="Briones M.R.S."/>
            <person name="Bueno M.R.P."/>
            <person name="Camargo A.A."/>
            <person name="Camargo L.E.A."/>
            <person name="Carraro D.M."/>
            <person name="Carrer H."/>
            <person name="Colauto N.B."/>
            <person name="Colombo C."/>
            <person name="Costa F.F."/>
            <person name="Costa M.C.R."/>
            <person name="Costa-Neto C.M."/>
            <person name="Coutinho L.L."/>
            <person name="Cristofani M."/>
            <person name="Dias-Neto E."/>
            <person name="Docena C."/>
            <person name="El-Dorry H."/>
            <person name="Facincani A.P."/>
            <person name="Ferreira A.J.S."/>
            <person name="Ferreira V.C.A."/>
            <person name="Ferro J.A."/>
            <person name="Fraga J.S."/>
            <person name="Franca S.C."/>
            <person name="Franco M.C."/>
            <person name="Frohme M."/>
            <person name="Furlan L.R."/>
            <person name="Garnier M."/>
            <person name="Goldman G.H."/>
            <person name="Goldman M.H.S."/>
            <person name="Gomes S.L."/>
            <person name="Gruber A."/>
            <person name="Ho P.L."/>
            <person name="Hoheisel J.D."/>
            <person name="Junqueira M.L."/>
            <person name="Kemper E.L."/>
            <person name="Kitajima J.P."/>
            <person name="Krieger J.E."/>
            <person name="Kuramae E.E."/>
            <person name="Laigret F."/>
            <person name="Lambais M.R."/>
            <person name="Leite L.C.C."/>
            <person name="Lemos E.G.M."/>
            <person name="Lemos M.V.F."/>
            <person name="Lopes S.A."/>
            <person name="Lopes C.R."/>
            <person name="Machado J.A."/>
            <person name="Machado M.A."/>
            <person name="Madeira A.M.B.N."/>
            <person name="Madeira H.M.F."/>
            <person name="Marino C.L."/>
            <person name="Marques M.V."/>
            <person name="Martins E.A.L."/>
            <person name="Martins E.M.F."/>
            <person name="Matsukuma A.Y."/>
            <person name="Menck C.F.M."/>
            <person name="Miracca E.C."/>
            <person name="Miyaki C.Y."/>
            <person name="Monteiro-Vitorello C.B."/>
            <person name="Moon D.H."/>
            <person name="Nagai M.A."/>
            <person name="Nascimento A.L.T.O."/>
            <person name="Netto L.E.S."/>
            <person name="Nhani A. Jr."/>
            <person name="Nobrega F.G."/>
            <person name="Nunes L.R."/>
            <person name="Oliveira M.A."/>
            <person name="de Oliveira M.C."/>
            <person name="de Oliveira R.C."/>
            <person name="Palmieri D.A."/>
            <person name="Paris A."/>
            <person name="Peixoto B.R."/>
            <person name="Pereira G.A.G."/>
            <person name="Pereira H.A. Jr."/>
            <person name="Pesquero J.B."/>
            <person name="Quaggio R.B."/>
            <person name="Roberto P.G."/>
            <person name="Rodrigues V."/>
            <person name="de Rosa A.J.M."/>
            <person name="de Rosa V.E. Jr."/>
            <person name="de Sa R.G."/>
            <person name="Santelli R.V."/>
            <person name="Sawasaki H.E."/>
            <person name="da Silva A.C.R."/>
            <person name="da Silva A.M."/>
            <person name="da Silva F.R."/>
            <person name="Silva W.A. Jr."/>
            <person name="da Silveira J.F."/>
            <person name="Silvestri M.L.Z."/>
            <person name="Siqueira W.J."/>
            <person name="de Souza A.A."/>
            <person name="de Souza A.P."/>
            <person name="Terenzi M.F."/>
            <person name="Truffi D."/>
            <person name="Tsai S.M."/>
            <person name="Tsuhako M.H."/>
            <person name="Vallada H."/>
            <person name="Van Sluys M.A."/>
            <person name="Verjovski-Almeida S."/>
            <person name="Vettore A.L."/>
            <person name="Zago M.A."/>
            <person name="Zatz M."/>
            <person name="Meidanis J."/>
            <person name="Setubal J.C."/>
        </authorList>
    </citation>
    <scope>NUCLEOTIDE SEQUENCE [LARGE SCALE GENOMIC DNA]</scope>
    <source>
        <strain>9a5c</strain>
    </source>
</reference>
<protein>
    <recommendedName>
        <fullName evidence="1">Ribosomal RNA small subunit methyltransferase H</fullName>
        <ecNumber evidence="1">2.1.1.199</ecNumber>
    </recommendedName>
    <alternativeName>
        <fullName evidence="1">16S rRNA m(4)C1402 methyltransferase</fullName>
    </alternativeName>
    <alternativeName>
        <fullName evidence="1">rRNA (cytosine-N(4)-)-methyltransferase RsmH</fullName>
    </alternativeName>
</protein>
<feature type="chain" id="PRO_0000108754" description="Ribosomal RNA small subunit methyltransferase H">
    <location>
        <begin position="1"/>
        <end position="313"/>
    </location>
</feature>
<feature type="binding site" evidence="1">
    <location>
        <begin position="31"/>
        <end position="33"/>
    </location>
    <ligand>
        <name>S-adenosyl-L-methionine</name>
        <dbReference type="ChEBI" id="CHEBI:59789"/>
    </ligand>
</feature>
<feature type="binding site" evidence="1">
    <location>
        <position position="51"/>
    </location>
    <ligand>
        <name>S-adenosyl-L-methionine</name>
        <dbReference type="ChEBI" id="CHEBI:59789"/>
    </ligand>
</feature>
<feature type="binding site" evidence="1">
    <location>
        <position position="77"/>
    </location>
    <ligand>
        <name>S-adenosyl-L-methionine</name>
        <dbReference type="ChEBI" id="CHEBI:59789"/>
    </ligand>
</feature>
<feature type="binding site" evidence="1">
    <location>
        <position position="95"/>
    </location>
    <ligand>
        <name>S-adenosyl-L-methionine</name>
        <dbReference type="ChEBI" id="CHEBI:59789"/>
    </ligand>
</feature>
<feature type="binding site" evidence="1">
    <location>
        <position position="102"/>
    </location>
    <ligand>
        <name>S-adenosyl-L-methionine</name>
        <dbReference type="ChEBI" id="CHEBI:59789"/>
    </ligand>
</feature>
<evidence type="ECO:0000255" key="1">
    <source>
        <dbReference type="HAMAP-Rule" id="MF_01007"/>
    </source>
</evidence>
<comment type="function">
    <text evidence="1">Specifically methylates the N4 position of cytidine in position 1402 (C1402) of 16S rRNA.</text>
</comment>
<comment type="catalytic activity">
    <reaction evidence="1">
        <text>cytidine(1402) in 16S rRNA + S-adenosyl-L-methionine = N(4)-methylcytidine(1402) in 16S rRNA + S-adenosyl-L-homocysteine + H(+)</text>
        <dbReference type="Rhea" id="RHEA:42928"/>
        <dbReference type="Rhea" id="RHEA-COMP:10286"/>
        <dbReference type="Rhea" id="RHEA-COMP:10287"/>
        <dbReference type="ChEBI" id="CHEBI:15378"/>
        <dbReference type="ChEBI" id="CHEBI:57856"/>
        <dbReference type="ChEBI" id="CHEBI:59789"/>
        <dbReference type="ChEBI" id="CHEBI:74506"/>
        <dbReference type="ChEBI" id="CHEBI:82748"/>
        <dbReference type="EC" id="2.1.1.199"/>
    </reaction>
</comment>
<comment type="subcellular location">
    <subcellularLocation>
        <location evidence="1">Cytoplasm</location>
    </subcellularLocation>
</comment>
<comment type="similarity">
    <text evidence="1">Belongs to the methyltransferase superfamily. RsmH family.</text>
</comment>
<name>RSMH_XYLFA</name>
<sequence>MTHVPVLYTQAMEGLRVVENGTYLDGTFGRGGHARGVLQLLGPGGRLLVMDKDPEAIAMAERAFSCDPRVVIRHGSFALLAQLAAPQSLDGVLFDLGVSSPQLDVPERGFSFVKDGPLDMRMDPEMGESAAQWLARVSEREIADVLWTYGEEKQSRRIARAIVAYRANQPLLRTVQLAELIASVMLRTKSGACKSRIHPATRSFQGIRIHVNRELVDLEVGLEAALAALRPGGRLVVISFHSLEDRIVKQFISRHAKVPPTNRRLPEVQTFVPLLRMIGRAIKADEDELEVNPRARSAVLRVAEKLDVLEAVR</sequence>